<gene>
    <name evidence="1" type="primary">miaB</name>
    <name type="ordered locus">FTN_1063</name>
</gene>
<name>MIAB_FRATN</name>
<reference key="1">
    <citation type="journal article" date="2007" name="Genome Biol.">
        <title>Comparison of Francisella tularensis genomes reveals evolutionary events associated with the emergence of human pathogenic strains.</title>
        <authorList>
            <person name="Rohmer L."/>
            <person name="Fong C."/>
            <person name="Abmayr S."/>
            <person name="Wasnick M."/>
            <person name="Larson Freeman T.J."/>
            <person name="Radey M."/>
            <person name="Guina T."/>
            <person name="Svensson K."/>
            <person name="Hayden H.S."/>
            <person name="Jacobs M."/>
            <person name="Gallagher L.A."/>
            <person name="Manoil C."/>
            <person name="Ernst R.K."/>
            <person name="Drees B."/>
            <person name="Buckley D."/>
            <person name="Haugen E."/>
            <person name="Bovee D."/>
            <person name="Zhou Y."/>
            <person name="Chang J."/>
            <person name="Levy R."/>
            <person name="Lim R."/>
            <person name="Gillett W."/>
            <person name="Guenthener D."/>
            <person name="Kang A."/>
            <person name="Shaffer S.A."/>
            <person name="Taylor G."/>
            <person name="Chen J."/>
            <person name="Gallis B."/>
            <person name="D'Argenio D.A."/>
            <person name="Forsman M."/>
            <person name="Olson M.V."/>
            <person name="Goodlett D.R."/>
            <person name="Kaul R."/>
            <person name="Miller S.I."/>
            <person name="Brittnacher M.J."/>
        </authorList>
    </citation>
    <scope>NUCLEOTIDE SEQUENCE [LARGE SCALE GENOMIC DNA]</scope>
    <source>
        <strain>U112</strain>
    </source>
</reference>
<protein>
    <recommendedName>
        <fullName evidence="1">tRNA-2-methylthio-N(6)-dimethylallyladenosine synthase</fullName>
        <ecNumber evidence="1">2.8.4.3</ecNumber>
    </recommendedName>
    <alternativeName>
        <fullName evidence="1">(Dimethylallyl)adenosine tRNA methylthiotransferase MiaB</fullName>
    </alternativeName>
    <alternativeName>
        <fullName evidence="1">tRNA-i(6)A37 methylthiotransferase</fullName>
    </alternativeName>
</protein>
<feature type="chain" id="PRO_0000374307" description="tRNA-2-methylthio-N(6)-dimethylallyladenosine synthase">
    <location>
        <begin position="1"/>
        <end position="442"/>
    </location>
</feature>
<feature type="domain" description="MTTase N-terminal" evidence="1">
    <location>
        <begin position="5"/>
        <end position="122"/>
    </location>
</feature>
<feature type="domain" description="Radical SAM core" evidence="2">
    <location>
        <begin position="145"/>
        <end position="378"/>
    </location>
</feature>
<feature type="domain" description="TRAM" evidence="1">
    <location>
        <begin position="380"/>
        <end position="442"/>
    </location>
</feature>
<feature type="binding site" evidence="1">
    <location>
        <position position="14"/>
    </location>
    <ligand>
        <name>[4Fe-4S] cluster</name>
        <dbReference type="ChEBI" id="CHEBI:49883"/>
        <label>1</label>
    </ligand>
</feature>
<feature type="binding site" evidence="1">
    <location>
        <position position="51"/>
    </location>
    <ligand>
        <name>[4Fe-4S] cluster</name>
        <dbReference type="ChEBI" id="CHEBI:49883"/>
        <label>1</label>
    </ligand>
</feature>
<feature type="binding site" evidence="1">
    <location>
        <position position="85"/>
    </location>
    <ligand>
        <name>[4Fe-4S] cluster</name>
        <dbReference type="ChEBI" id="CHEBI:49883"/>
        <label>1</label>
    </ligand>
</feature>
<feature type="binding site" evidence="1">
    <location>
        <position position="159"/>
    </location>
    <ligand>
        <name>[4Fe-4S] cluster</name>
        <dbReference type="ChEBI" id="CHEBI:49883"/>
        <label>2</label>
        <note>4Fe-4S-S-AdoMet</note>
    </ligand>
</feature>
<feature type="binding site" evidence="1">
    <location>
        <position position="163"/>
    </location>
    <ligand>
        <name>[4Fe-4S] cluster</name>
        <dbReference type="ChEBI" id="CHEBI:49883"/>
        <label>2</label>
        <note>4Fe-4S-S-AdoMet</note>
    </ligand>
</feature>
<feature type="binding site" evidence="1">
    <location>
        <position position="166"/>
    </location>
    <ligand>
        <name>[4Fe-4S] cluster</name>
        <dbReference type="ChEBI" id="CHEBI:49883"/>
        <label>2</label>
        <note>4Fe-4S-S-AdoMet</note>
    </ligand>
</feature>
<keyword id="KW-0004">4Fe-4S</keyword>
<keyword id="KW-0963">Cytoplasm</keyword>
<keyword id="KW-0408">Iron</keyword>
<keyword id="KW-0411">Iron-sulfur</keyword>
<keyword id="KW-0479">Metal-binding</keyword>
<keyword id="KW-0949">S-adenosyl-L-methionine</keyword>
<keyword id="KW-0808">Transferase</keyword>
<keyword id="KW-0819">tRNA processing</keyword>
<sequence length="442" mass="50178">MKEQKKVFIKTLGCQMNEYDSARMHEVLNEHFDTVKTDDYKDADIILINTCSIREKAQEKVFHELGRWKGLKKTNEDLIIGVGGCVASQEGENIIKRAPFVDLVFGPQTIHRLPEMIKQKQKTQQSQVDISFPEVEKFDYLPEPKAEGAKAYVSIMEGCDKYCSYCVVPYTRGPEVNRPFEDVLAECAILAEQGVKEITLLGQNVNHYLGPMENGQTADLALLIHFIAEIDGIERIRFTTSHPVEFSQNLIDAYATVPELANHLHLPVQHGSDRILINMKRNHTILEFKQKIRKLRAIRPDITISSDFIVGFPGETEEDFQKLLDLVKEINFDQSFSFIYSKRPGTPAADLPDDTPMEVKKDRLKRLQDLLNSNAQIISRQMVGTNQRILVDGTSKKDDNILSGRTENNRVVNFKGDKSLIGQFAMVKITESLPNSLRGELI</sequence>
<organism>
    <name type="scientific">Francisella tularensis subsp. novicida (strain U112)</name>
    <dbReference type="NCBI Taxonomy" id="401614"/>
    <lineage>
        <taxon>Bacteria</taxon>
        <taxon>Pseudomonadati</taxon>
        <taxon>Pseudomonadota</taxon>
        <taxon>Gammaproteobacteria</taxon>
        <taxon>Thiotrichales</taxon>
        <taxon>Francisellaceae</taxon>
        <taxon>Francisella</taxon>
    </lineage>
</organism>
<comment type="function">
    <text evidence="1">Catalyzes the methylthiolation of N6-(dimethylallyl)adenosine (i(6)A), leading to the formation of 2-methylthio-N6-(dimethylallyl)adenosine (ms(2)i(6)A) at position 37 in tRNAs that read codons beginning with uridine.</text>
</comment>
<comment type="catalytic activity">
    <reaction evidence="1">
        <text>N(6)-dimethylallyladenosine(37) in tRNA + (sulfur carrier)-SH + AH2 + 2 S-adenosyl-L-methionine = 2-methylsulfanyl-N(6)-dimethylallyladenosine(37) in tRNA + (sulfur carrier)-H + 5'-deoxyadenosine + L-methionine + A + S-adenosyl-L-homocysteine + 2 H(+)</text>
        <dbReference type="Rhea" id="RHEA:37067"/>
        <dbReference type="Rhea" id="RHEA-COMP:10375"/>
        <dbReference type="Rhea" id="RHEA-COMP:10376"/>
        <dbReference type="Rhea" id="RHEA-COMP:14737"/>
        <dbReference type="Rhea" id="RHEA-COMP:14739"/>
        <dbReference type="ChEBI" id="CHEBI:13193"/>
        <dbReference type="ChEBI" id="CHEBI:15378"/>
        <dbReference type="ChEBI" id="CHEBI:17319"/>
        <dbReference type="ChEBI" id="CHEBI:17499"/>
        <dbReference type="ChEBI" id="CHEBI:29917"/>
        <dbReference type="ChEBI" id="CHEBI:57844"/>
        <dbReference type="ChEBI" id="CHEBI:57856"/>
        <dbReference type="ChEBI" id="CHEBI:59789"/>
        <dbReference type="ChEBI" id="CHEBI:64428"/>
        <dbReference type="ChEBI" id="CHEBI:74415"/>
        <dbReference type="ChEBI" id="CHEBI:74417"/>
        <dbReference type="EC" id="2.8.4.3"/>
    </reaction>
</comment>
<comment type="cofactor">
    <cofactor evidence="1">
        <name>[4Fe-4S] cluster</name>
        <dbReference type="ChEBI" id="CHEBI:49883"/>
    </cofactor>
    <text evidence="1">Binds 2 [4Fe-4S] clusters. One cluster is coordinated with 3 cysteines and an exchangeable S-adenosyl-L-methionine.</text>
</comment>
<comment type="subunit">
    <text evidence="1">Monomer.</text>
</comment>
<comment type="subcellular location">
    <subcellularLocation>
        <location evidence="1">Cytoplasm</location>
    </subcellularLocation>
</comment>
<comment type="similarity">
    <text evidence="1">Belongs to the methylthiotransferase family. MiaB subfamily.</text>
</comment>
<evidence type="ECO:0000255" key="1">
    <source>
        <dbReference type="HAMAP-Rule" id="MF_01864"/>
    </source>
</evidence>
<evidence type="ECO:0000255" key="2">
    <source>
        <dbReference type="PROSITE-ProRule" id="PRU01266"/>
    </source>
</evidence>
<proteinExistence type="inferred from homology"/>
<dbReference type="EC" id="2.8.4.3" evidence="1"/>
<dbReference type="EMBL" id="CP000439">
    <property type="protein sequence ID" value="ABK89950.1"/>
    <property type="molecule type" value="Genomic_DNA"/>
</dbReference>
<dbReference type="RefSeq" id="WP_003023392.1">
    <property type="nucleotide sequence ID" value="NZ_CP009633.1"/>
</dbReference>
<dbReference type="SMR" id="A0Q6T5"/>
<dbReference type="GeneID" id="75265204"/>
<dbReference type="KEGG" id="ftn:FTN_1063"/>
<dbReference type="KEGG" id="ftx:AW25_945"/>
<dbReference type="BioCyc" id="FTUL401614:G1G75-1106-MONOMER"/>
<dbReference type="Proteomes" id="UP000000762">
    <property type="component" value="Chromosome"/>
</dbReference>
<dbReference type="GO" id="GO:0005829">
    <property type="term" value="C:cytosol"/>
    <property type="evidence" value="ECO:0007669"/>
    <property type="project" value="TreeGrafter"/>
</dbReference>
<dbReference type="GO" id="GO:0051539">
    <property type="term" value="F:4 iron, 4 sulfur cluster binding"/>
    <property type="evidence" value="ECO:0007669"/>
    <property type="project" value="UniProtKB-UniRule"/>
</dbReference>
<dbReference type="GO" id="GO:0046872">
    <property type="term" value="F:metal ion binding"/>
    <property type="evidence" value="ECO:0007669"/>
    <property type="project" value="UniProtKB-KW"/>
</dbReference>
<dbReference type="GO" id="GO:0035597">
    <property type="term" value="F:N6-isopentenyladenosine methylthiotransferase activity"/>
    <property type="evidence" value="ECO:0007669"/>
    <property type="project" value="TreeGrafter"/>
</dbReference>
<dbReference type="CDD" id="cd01335">
    <property type="entry name" value="Radical_SAM"/>
    <property type="match status" value="1"/>
</dbReference>
<dbReference type="FunFam" id="3.40.50.12160:FF:000001">
    <property type="entry name" value="tRNA-2-methylthio-N(6)-dimethylallyladenosine synthase"/>
    <property type="match status" value="1"/>
</dbReference>
<dbReference type="FunFam" id="3.80.30.20:FF:000001">
    <property type="entry name" value="tRNA-2-methylthio-N(6)-dimethylallyladenosine synthase 2"/>
    <property type="match status" value="1"/>
</dbReference>
<dbReference type="Gene3D" id="3.40.50.12160">
    <property type="entry name" value="Methylthiotransferase, N-terminal domain"/>
    <property type="match status" value="1"/>
</dbReference>
<dbReference type="Gene3D" id="3.80.30.20">
    <property type="entry name" value="tm_1862 like domain"/>
    <property type="match status" value="1"/>
</dbReference>
<dbReference type="HAMAP" id="MF_01864">
    <property type="entry name" value="tRNA_metthiotr_MiaB"/>
    <property type="match status" value="1"/>
</dbReference>
<dbReference type="InterPro" id="IPR006638">
    <property type="entry name" value="Elp3/MiaA/NifB-like_rSAM"/>
</dbReference>
<dbReference type="InterPro" id="IPR005839">
    <property type="entry name" value="Methylthiotransferase"/>
</dbReference>
<dbReference type="InterPro" id="IPR020612">
    <property type="entry name" value="Methylthiotransferase_CS"/>
</dbReference>
<dbReference type="InterPro" id="IPR013848">
    <property type="entry name" value="Methylthiotransferase_N"/>
</dbReference>
<dbReference type="InterPro" id="IPR038135">
    <property type="entry name" value="Methylthiotransferase_N_sf"/>
</dbReference>
<dbReference type="InterPro" id="IPR006463">
    <property type="entry name" value="MiaB_methiolase"/>
</dbReference>
<dbReference type="InterPro" id="IPR007197">
    <property type="entry name" value="rSAM"/>
</dbReference>
<dbReference type="InterPro" id="IPR023404">
    <property type="entry name" value="rSAM_horseshoe"/>
</dbReference>
<dbReference type="InterPro" id="IPR002792">
    <property type="entry name" value="TRAM_dom"/>
</dbReference>
<dbReference type="NCBIfam" id="TIGR01574">
    <property type="entry name" value="miaB-methiolase"/>
    <property type="match status" value="1"/>
</dbReference>
<dbReference type="NCBIfam" id="TIGR00089">
    <property type="entry name" value="MiaB/RimO family radical SAM methylthiotransferase"/>
    <property type="match status" value="1"/>
</dbReference>
<dbReference type="PANTHER" id="PTHR43020">
    <property type="entry name" value="CDK5 REGULATORY SUBUNIT-ASSOCIATED PROTEIN 1"/>
    <property type="match status" value="1"/>
</dbReference>
<dbReference type="PANTHER" id="PTHR43020:SF2">
    <property type="entry name" value="MITOCHONDRIAL TRNA METHYLTHIOTRANSFERASE CDK5RAP1"/>
    <property type="match status" value="1"/>
</dbReference>
<dbReference type="Pfam" id="PF04055">
    <property type="entry name" value="Radical_SAM"/>
    <property type="match status" value="1"/>
</dbReference>
<dbReference type="Pfam" id="PF01938">
    <property type="entry name" value="TRAM"/>
    <property type="match status" value="1"/>
</dbReference>
<dbReference type="Pfam" id="PF00919">
    <property type="entry name" value="UPF0004"/>
    <property type="match status" value="1"/>
</dbReference>
<dbReference type="SFLD" id="SFLDF00273">
    <property type="entry name" value="(dimethylallyl)adenosine_tRNA"/>
    <property type="match status" value="1"/>
</dbReference>
<dbReference type="SFLD" id="SFLDG01082">
    <property type="entry name" value="B12-binding_domain_containing"/>
    <property type="match status" value="1"/>
</dbReference>
<dbReference type="SFLD" id="SFLDS00029">
    <property type="entry name" value="Radical_SAM"/>
    <property type="match status" value="1"/>
</dbReference>
<dbReference type="SMART" id="SM00729">
    <property type="entry name" value="Elp3"/>
    <property type="match status" value="1"/>
</dbReference>
<dbReference type="SUPFAM" id="SSF102114">
    <property type="entry name" value="Radical SAM enzymes"/>
    <property type="match status" value="1"/>
</dbReference>
<dbReference type="PROSITE" id="PS51449">
    <property type="entry name" value="MTTASE_N"/>
    <property type="match status" value="1"/>
</dbReference>
<dbReference type="PROSITE" id="PS01278">
    <property type="entry name" value="MTTASE_RADICAL"/>
    <property type="match status" value="1"/>
</dbReference>
<dbReference type="PROSITE" id="PS51918">
    <property type="entry name" value="RADICAL_SAM"/>
    <property type="match status" value="1"/>
</dbReference>
<dbReference type="PROSITE" id="PS50926">
    <property type="entry name" value="TRAM"/>
    <property type="match status" value="1"/>
</dbReference>
<accession>A0Q6T5</accession>